<sequence>MSDQFNSREARRKANSKSSPSPKKGKKRKKGGLFKKTLFTLLILFVLGVVGGAVTFAVMVSDAPSLDESKLKTPYSSTIYDKNGKEIAEVGAEKRTYVSIDEIPDVVKEAFIATEDARFYEHHGIDPVRIGGALVANFKDGFGAEGGSTITQQVVKNSLLSHQKTLKRKVQEVWLSIQLERNYSKDEILEMYLNRIYFSPRAYGIGKAAEEFFGVTDLSKLTVEQAATLAGMPQSPTAYNPVKNPDKAEKRRNIVLSLMKKQGFISDSQYNKAKKVAVKDEGVVSQKEYEKASTNKYSAFVEEVMKEIDEKSDVDPSADGLKIYTTLDTKAQDKLDELMDGDTVGFTEGMQGGVTLLDTKNGEVRAIGAGRNQPVGGFNYATQTKAQPGSTIKPILDYGPVIENKKWSTYEQIDDSAYTYSNGKPIRDWDRKYLGPISMRYALAQSRNIPALKAFQAVGKDTAVDFANGLGLGLTKDNVTEAYSIGGFGGNDGVSPLTMAGAYSAFGNNGTYNEPHFVKSIEFNDGTKLDLTPKSKSAMSDYTAFMITDMLKTAVKTGTGQLAQVPGVEVAGKTGTTNFDDNEVKRYNIASGGARDSWFVGYTPQYTAAVWTGMGENEAGKKSLSAEEQKVAKRIFAQLIADVDDGSGSFEKPDSVVEATVEKGSNPAKLAGPNTPSDKKLTEYFVKGTAPSTVSKTYEKEEKEETAKLSGLNVKYDKDNQSLTLSWNYDGDATFAVKQSVDGGSYSEIQNSSAKEAVISGVQPGSVYKFEVTAVSDDGKSTASTSYEVPKAEDDEDKKDQQQTDDEKQDDEKTQDDTQTDDSQKDDGQTDQDQTDDSTNDQDKKQDNTNTNPSDNNNQDQSNDNDNDNSNNQDTSDGDSNSGKNDSTGSDTNKNKTDTSNKTQTNSSSIEKTN</sequence>
<keyword id="KW-0046">Antibiotic resistance</keyword>
<keyword id="KW-0121">Carboxypeptidase</keyword>
<keyword id="KW-1003">Cell membrane</keyword>
<keyword id="KW-0133">Cell shape</keyword>
<keyword id="KW-0961">Cell wall biogenesis/degradation</keyword>
<keyword id="KW-0903">Direct protein sequencing</keyword>
<keyword id="KW-0328">Glycosyltransferase</keyword>
<keyword id="KW-0378">Hydrolase</keyword>
<keyword id="KW-0472">Membrane</keyword>
<keyword id="KW-0511">Multifunctional enzyme</keyword>
<keyword id="KW-0573">Peptidoglycan synthesis</keyword>
<keyword id="KW-0645">Protease</keyword>
<keyword id="KW-1185">Reference proteome</keyword>
<keyword id="KW-0735">Signal-anchor</keyword>
<keyword id="KW-0808">Transferase</keyword>
<keyword id="KW-0812">Transmembrane</keyword>
<keyword id="KW-1133">Transmembrane helix</keyword>
<gene>
    <name type="primary">ponA</name>
    <name type="ordered locus">BSU22320</name>
</gene>
<dbReference type="EC" id="2.4.99.28" evidence="1"/>
<dbReference type="EC" id="3.4.16.4" evidence="1"/>
<dbReference type="EMBL" id="U11883">
    <property type="protein sequence ID" value="AAA64947.1"/>
    <property type="molecule type" value="Genomic_DNA"/>
</dbReference>
<dbReference type="EMBL" id="L47838">
    <property type="protein sequence ID" value="AAB38459.1"/>
    <property type="molecule type" value="Genomic_DNA"/>
</dbReference>
<dbReference type="EMBL" id="AL009126">
    <property type="protein sequence ID" value="CAB14148.1"/>
    <property type="molecule type" value="Genomic_DNA"/>
</dbReference>
<dbReference type="PIR" id="I40529">
    <property type="entry name" value="I40529"/>
</dbReference>
<dbReference type="RefSeq" id="NP_390113.1">
    <property type="nucleotide sequence ID" value="NC_000964.3"/>
</dbReference>
<dbReference type="RefSeq" id="WP_004398589.1">
    <property type="nucleotide sequence ID" value="NZ_OZ025638.1"/>
</dbReference>
<dbReference type="SMR" id="P39793"/>
<dbReference type="FunCoup" id="P39793">
    <property type="interactions" value="36"/>
</dbReference>
<dbReference type="IntAct" id="P39793">
    <property type="interactions" value="5"/>
</dbReference>
<dbReference type="STRING" id="224308.BSU22320"/>
<dbReference type="CAZy" id="GT51">
    <property type="family name" value="Glycosyltransferase Family 51"/>
</dbReference>
<dbReference type="jPOST" id="P39793"/>
<dbReference type="PaxDb" id="224308-BSU22320"/>
<dbReference type="EnsemblBacteria" id="CAB14148">
    <property type="protein sequence ID" value="CAB14148"/>
    <property type="gene ID" value="BSU_22320"/>
</dbReference>
<dbReference type="GeneID" id="939044"/>
<dbReference type="KEGG" id="bsu:BSU22320"/>
<dbReference type="PATRIC" id="fig|224308.179.peg.2436"/>
<dbReference type="eggNOG" id="COG0744">
    <property type="taxonomic scope" value="Bacteria"/>
</dbReference>
<dbReference type="eggNOG" id="COG4499">
    <property type="taxonomic scope" value="Bacteria"/>
</dbReference>
<dbReference type="InParanoid" id="P39793"/>
<dbReference type="OrthoDB" id="9766909at2"/>
<dbReference type="PhylomeDB" id="P39793"/>
<dbReference type="BioCyc" id="BSUB:BSU22320-MONOMER"/>
<dbReference type="UniPathway" id="UPA00219"/>
<dbReference type="Proteomes" id="UP000001570">
    <property type="component" value="Chromosome"/>
</dbReference>
<dbReference type="GO" id="GO:0030288">
    <property type="term" value="C:outer membrane-bounded periplasmic space"/>
    <property type="evidence" value="ECO:0000318"/>
    <property type="project" value="GO_Central"/>
</dbReference>
<dbReference type="GO" id="GO:0005886">
    <property type="term" value="C:plasma membrane"/>
    <property type="evidence" value="ECO:0007669"/>
    <property type="project" value="UniProtKB-SubCell"/>
</dbReference>
<dbReference type="GO" id="GO:0008658">
    <property type="term" value="F:penicillin binding"/>
    <property type="evidence" value="ECO:0007669"/>
    <property type="project" value="InterPro"/>
</dbReference>
<dbReference type="GO" id="GO:0008955">
    <property type="term" value="F:peptidoglycan glycosyltransferase activity"/>
    <property type="evidence" value="ECO:0000318"/>
    <property type="project" value="GO_Central"/>
</dbReference>
<dbReference type="GO" id="GO:0009002">
    <property type="term" value="F:serine-type D-Ala-D-Ala carboxypeptidase activity"/>
    <property type="evidence" value="ECO:0007669"/>
    <property type="project" value="UniProtKB-EC"/>
</dbReference>
<dbReference type="GO" id="GO:0071555">
    <property type="term" value="P:cell wall organization"/>
    <property type="evidence" value="ECO:0007669"/>
    <property type="project" value="UniProtKB-KW"/>
</dbReference>
<dbReference type="GO" id="GO:0009252">
    <property type="term" value="P:peptidoglycan biosynthetic process"/>
    <property type="evidence" value="ECO:0000318"/>
    <property type="project" value="GO_Central"/>
</dbReference>
<dbReference type="GO" id="GO:0006508">
    <property type="term" value="P:proteolysis"/>
    <property type="evidence" value="ECO:0007669"/>
    <property type="project" value="UniProtKB-KW"/>
</dbReference>
<dbReference type="GO" id="GO:0008360">
    <property type="term" value="P:regulation of cell shape"/>
    <property type="evidence" value="ECO:0007669"/>
    <property type="project" value="UniProtKB-KW"/>
</dbReference>
<dbReference type="GO" id="GO:0046677">
    <property type="term" value="P:response to antibiotic"/>
    <property type="evidence" value="ECO:0007669"/>
    <property type="project" value="UniProtKB-KW"/>
</dbReference>
<dbReference type="CDD" id="cd00063">
    <property type="entry name" value="FN3"/>
    <property type="match status" value="1"/>
</dbReference>
<dbReference type="FunFam" id="1.10.3810.10:FF:000001">
    <property type="entry name" value="Penicillin-binding protein 1A"/>
    <property type="match status" value="1"/>
</dbReference>
<dbReference type="Gene3D" id="1.10.3810.10">
    <property type="entry name" value="Biosynthetic peptidoglycan transglycosylase-like"/>
    <property type="match status" value="1"/>
</dbReference>
<dbReference type="Gene3D" id="3.40.710.10">
    <property type="entry name" value="DD-peptidase/beta-lactamase superfamily"/>
    <property type="match status" value="1"/>
</dbReference>
<dbReference type="Gene3D" id="2.60.40.10">
    <property type="entry name" value="Immunoglobulins"/>
    <property type="match status" value="1"/>
</dbReference>
<dbReference type="InterPro" id="IPR012338">
    <property type="entry name" value="Beta-lactam/transpept-like"/>
</dbReference>
<dbReference type="InterPro" id="IPR003961">
    <property type="entry name" value="FN3_dom"/>
</dbReference>
<dbReference type="InterPro" id="IPR036116">
    <property type="entry name" value="FN3_sf"/>
</dbReference>
<dbReference type="InterPro" id="IPR001264">
    <property type="entry name" value="Glyco_trans_51"/>
</dbReference>
<dbReference type="InterPro" id="IPR050396">
    <property type="entry name" value="Glycosyltr_51/Transpeptidase"/>
</dbReference>
<dbReference type="InterPro" id="IPR013783">
    <property type="entry name" value="Ig-like_fold"/>
</dbReference>
<dbReference type="InterPro" id="IPR023346">
    <property type="entry name" value="Lysozyme-like_dom_sf"/>
</dbReference>
<dbReference type="InterPro" id="IPR036950">
    <property type="entry name" value="PBP_transglycosylase"/>
</dbReference>
<dbReference type="InterPro" id="IPR001460">
    <property type="entry name" value="PCN-bd_Tpept"/>
</dbReference>
<dbReference type="NCBIfam" id="TIGR02074">
    <property type="entry name" value="PBP_1a_fam"/>
    <property type="match status" value="1"/>
</dbReference>
<dbReference type="PANTHER" id="PTHR32282">
    <property type="entry name" value="BINDING PROTEIN TRANSPEPTIDASE, PUTATIVE-RELATED"/>
    <property type="match status" value="1"/>
</dbReference>
<dbReference type="PANTHER" id="PTHR32282:SF29">
    <property type="entry name" value="PENICILLIN-BINDING PROTEIN 1A"/>
    <property type="match status" value="1"/>
</dbReference>
<dbReference type="Pfam" id="PF00912">
    <property type="entry name" value="Transgly"/>
    <property type="match status" value="1"/>
</dbReference>
<dbReference type="Pfam" id="PF00905">
    <property type="entry name" value="Transpeptidase"/>
    <property type="match status" value="1"/>
</dbReference>
<dbReference type="SUPFAM" id="SSF56601">
    <property type="entry name" value="beta-lactamase/transpeptidase-like"/>
    <property type="match status" value="1"/>
</dbReference>
<dbReference type="SUPFAM" id="SSF49265">
    <property type="entry name" value="Fibronectin type III"/>
    <property type="match status" value="1"/>
</dbReference>
<dbReference type="SUPFAM" id="SSF53955">
    <property type="entry name" value="Lysozyme-like"/>
    <property type="match status" value="1"/>
</dbReference>
<dbReference type="PROSITE" id="PS50853">
    <property type="entry name" value="FN3"/>
    <property type="match status" value="1"/>
</dbReference>
<comment type="function">
    <text evidence="9 10 11">Cell wall formation. Synthesis of cross-linked peptidoglycan from the lipid intermediates. The enzyme has a penicillin-insensitive transglycosylase N-terminal domain (formation of linear glycan strands) and a penicillin-sensitive transpeptidase C-terminal domain (cross-linking of the peptide subunits) (Probable). Required for vegetative growth (Probable). Has a partially redundant function with PBP-2A (pbpA) during spore outgrowth (PubMed:9851991).</text>
</comment>
<comment type="catalytic activity">
    <reaction evidence="1">
        <text>[GlcNAc-(1-&gt;4)-Mur2Ac(oyl-L-Ala-gamma-D-Glu-L-Lys-D-Ala-D-Ala)](n)-di-trans,octa-cis-undecaprenyl diphosphate + beta-D-GlcNAc-(1-&gt;4)-Mur2Ac(oyl-L-Ala-gamma-D-Glu-L-Lys-D-Ala-D-Ala)-di-trans,octa-cis-undecaprenyl diphosphate = [GlcNAc-(1-&gt;4)-Mur2Ac(oyl-L-Ala-gamma-D-Glu-L-Lys-D-Ala-D-Ala)](n+1)-di-trans,octa-cis-undecaprenyl diphosphate + di-trans,octa-cis-undecaprenyl diphosphate + H(+)</text>
        <dbReference type="Rhea" id="RHEA:23708"/>
        <dbReference type="Rhea" id="RHEA-COMP:9602"/>
        <dbReference type="Rhea" id="RHEA-COMP:9603"/>
        <dbReference type="ChEBI" id="CHEBI:15378"/>
        <dbReference type="ChEBI" id="CHEBI:58405"/>
        <dbReference type="ChEBI" id="CHEBI:60033"/>
        <dbReference type="ChEBI" id="CHEBI:78435"/>
        <dbReference type="EC" id="2.4.99.28"/>
    </reaction>
</comment>
<comment type="catalytic activity">
    <reaction evidence="1">
        <text>Preferential cleavage: (Ac)2-L-Lys-D-Ala-|-D-Ala. Also transpeptidation of peptidyl-alanyl moieties that are N-acyl substituents of D-alanine.</text>
        <dbReference type="EC" id="3.4.16.4"/>
    </reaction>
</comment>
<comment type="pathway">
    <text>Cell wall biogenesis; peptidoglycan biosynthesis.</text>
</comment>
<comment type="subcellular location">
    <subcellularLocation>
        <location evidence="6">Cell membrane</location>
        <topology evidence="6">Single-pass type II membrane protein</topology>
    </subcellularLocation>
    <subcellularLocation>
        <location evidence="7">Forespore inner membrane</location>
        <topology evidence="3">Single-pass type II membrane protein</topology>
    </subcellularLocation>
    <text>Probably found all over the whole cell at low concentrations. Also localizes to the division site in vegetative cells.</text>
</comment>
<comment type="developmental stage">
    <text evidence="7">Expression is constant during growth, decreases during sporulation and is induced approximately 15 minutes into spore germination. Present in the inner forespore membrane of the dormant spore (PubMed:3080407).</text>
</comment>
<comment type="PTM">
    <text>The product expressed from the translation of the ponA gene appears as two bands on a gel (1A and 1B), but the specific amino acid sequence of each protein is unknown.</text>
</comment>
<comment type="PTM">
    <text>The N-terminus is blocked.</text>
</comment>
<comment type="disruption phenotype">
    <text evidence="8 9">Cells require increased levels of Mg(2+) or Ca(2+) for growth and germination. Approximately 50% of cells without the gene contain abnormal FtsZ rings, suggesting it is involved in septum synthesis; increased levels of Mg(2+) or Ca(2+) only partially eliminate the septation defects (PubMed:9721295). Double ponA-pbpA deletions spores have greatly decreased viability, peptidoglycan synthesis and elongate poorly; increased levels of Mg(2+) increase spore viability (PubMed:9851991).</text>
</comment>
<comment type="similarity">
    <text evidence="10">In the N-terminal section; belongs to the glycosyltransferase 51 family.</text>
</comment>
<comment type="similarity">
    <text evidence="10">In the C-terminal section; belongs to the transpeptidase family.</text>
</comment>
<name>PBPA_BACSU</name>
<organism>
    <name type="scientific">Bacillus subtilis (strain 168)</name>
    <dbReference type="NCBI Taxonomy" id="224308"/>
    <lineage>
        <taxon>Bacteria</taxon>
        <taxon>Bacillati</taxon>
        <taxon>Bacillota</taxon>
        <taxon>Bacilli</taxon>
        <taxon>Bacillales</taxon>
        <taxon>Bacillaceae</taxon>
        <taxon>Bacillus</taxon>
    </lineage>
</organism>
<evidence type="ECO:0000250" key="1">
    <source>
        <dbReference type="UniProtKB" id="P02918"/>
    </source>
</evidence>
<evidence type="ECO:0000250" key="2">
    <source>
        <dbReference type="UniProtKB" id="P02919"/>
    </source>
</evidence>
<evidence type="ECO:0000255" key="3"/>
<evidence type="ECO:0000255" key="4">
    <source>
        <dbReference type="PROSITE-ProRule" id="PRU00316"/>
    </source>
</evidence>
<evidence type="ECO:0000256" key="5">
    <source>
        <dbReference type="SAM" id="MobiDB-lite"/>
    </source>
</evidence>
<evidence type="ECO:0000269" key="6">
    <source>
    </source>
</evidence>
<evidence type="ECO:0000269" key="7">
    <source>
    </source>
</evidence>
<evidence type="ECO:0000269" key="8">
    <source>
    </source>
</evidence>
<evidence type="ECO:0000269" key="9">
    <source>
    </source>
</evidence>
<evidence type="ECO:0000305" key="10"/>
<evidence type="ECO:0000305" key="11">
    <source>
    </source>
</evidence>
<accession>P39793</accession>
<feature type="chain" id="PRO_0000083179" description="Penicillin-binding protein 1A/1B">
    <location>
        <begin position="1"/>
        <end position="914"/>
    </location>
</feature>
<feature type="topological domain" description="Cytoplasmic" evidence="3">
    <location>
        <begin position="1"/>
        <end position="37"/>
    </location>
</feature>
<feature type="transmembrane region" description="Helical; Signal-anchor for type II membrane protein" evidence="3">
    <location>
        <begin position="38"/>
        <end position="58"/>
    </location>
</feature>
<feature type="topological domain" description="Extracellular" evidence="3">
    <location>
        <begin position="59"/>
        <end position="914"/>
    </location>
</feature>
<feature type="domain" description="Fibronectin type-III" evidence="4">
    <location>
        <begin position="708"/>
        <end position="795"/>
    </location>
</feature>
<feature type="region of interest" description="Disordered" evidence="5">
    <location>
        <begin position="1"/>
        <end position="29"/>
    </location>
</feature>
<feature type="region of interest" description="Transglycosylase">
    <location>
        <begin position="77"/>
        <end position="246"/>
    </location>
</feature>
<feature type="region of interest" description="Transpeptidase">
    <location>
        <begin position="329"/>
        <end position="662"/>
    </location>
</feature>
<feature type="region of interest" description="Disordered" evidence="5">
    <location>
        <begin position="773"/>
        <end position="914"/>
    </location>
</feature>
<feature type="compositionally biased region" description="Basic and acidic residues" evidence="5">
    <location>
        <begin position="798"/>
        <end position="828"/>
    </location>
</feature>
<feature type="compositionally biased region" description="Acidic residues" evidence="5">
    <location>
        <begin position="829"/>
        <end position="840"/>
    </location>
</feature>
<feature type="compositionally biased region" description="Low complexity" evidence="5">
    <location>
        <begin position="848"/>
        <end position="892"/>
    </location>
</feature>
<feature type="compositionally biased region" description="Low complexity" evidence="5">
    <location>
        <begin position="900"/>
        <end position="914"/>
    </location>
</feature>
<feature type="active site" description="Proton donor; for transglycosylase activity" evidence="2">
    <location>
        <position position="115"/>
    </location>
</feature>
<feature type="active site" description="Acyl-ester intermediate; for transpeptidase activity" evidence="2">
    <location>
        <position position="390"/>
    </location>
</feature>
<protein>
    <recommendedName>
        <fullName>Penicillin-binding protein 1A/1B</fullName>
        <shortName>PBP1</shortName>
    </recommendedName>
    <domain>
        <recommendedName>
            <fullName>Penicillin-insensitive transglycosylase</fullName>
            <ecNumber evidence="1">2.4.99.28</ecNumber>
        </recommendedName>
        <alternativeName>
            <fullName>Peptidoglycan TGase</fullName>
        </alternativeName>
    </domain>
    <domain>
        <recommendedName>
            <fullName>Penicillin-sensitive transpeptidase</fullName>
            <ecNumber evidence="1">3.4.16.4</ecNumber>
        </recommendedName>
        <alternativeName>
            <fullName>DD-transpeptidase</fullName>
        </alternativeName>
    </domain>
</protein>
<reference key="1">
    <citation type="journal article" date="1995" name="J. Bacteriol.">
        <title>Cloning, nucleotide sequence, and mutagenesis of the Bacillus subtilis ponA operon, which codes for penicillin-binding protein (PBP) 1 and a PBP-related factor.</title>
        <authorList>
            <person name="Popham D.L."/>
            <person name="Setlow P."/>
        </authorList>
    </citation>
    <scope>NUCLEOTIDE SEQUENCE [GENOMIC DNA]</scope>
    <scope>PROTEIN SEQUENCE OF 499-515</scope>
    <source>
        <strain>168</strain>
    </source>
</reference>
<reference key="2">
    <citation type="journal article" date="1996" name="Microbiology">
        <title>Sequence analysis of the Bacillus subtilis chromosome region between the serA and kdg loci cloned in a yeast artificial chromosome.</title>
        <authorList>
            <person name="Sorokin A.V."/>
            <person name="Azevedo V."/>
            <person name="Zumstein E."/>
            <person name="Galleron N."/>
            <person name="Ehrlich S.D."/>
            <person name="Serror P."/>
        </authorList>
    </citation>
    <scope>NUCLEOTIDE SEQUENCE [GENOMIC DNA]</scope>
    <source>
        <strain>168 / Marburg / ATCC 6051 / DSM 10 / JCM 1465 / NBRC 13719 / NCIMB 3610 / NRRL NRS-744 / VKM B-501</strain>
    </source>
</reference>
<reference key="3">
    <citation type="journal article" date="1997" name="Nature">
        <title>The complete genome sequence of the Gram-positive bacterium Bacillus subtilis.</title>
        <authorList>
            <person name="Kunst F."/>
            <person name="Ogasawara N."/>
            <person name="Moszer I."/>
            <person name="Albertini A.M."/>
            <person name="Alloni G."/>
            <person name="Azevedo V."/>
            <person name="Bertero M.G."/>
            <person name="Bessieres P."/>
            <person name="Bolotin A."/>
            <person name="Borchert S."/>
            <person name="Borriss R."/>
            <person name="Boursier L."/>
            <person name="Brans A."/>
            <person name="Braun M."/>
            <person name="Brignell S.C."/>
            <person name="Bron S."/>
            <person name="Brouillet S."/>
            <person name="Bruschi C.V."/>
            <person name="Caldwell B."/>
            <person name="Capuano V."/>
            <person name="Carter N.M."/>
            <person name="Choi S.-K."/>
            <person name="Codani J.-J."/>
            <person name="Connerton I.F."/>
            <person name="Cummings N.J."/>
            <person name="Daniel R.A."/>
            <person name="Denizot F."/>
            <person name="Devine K.M."/>
            <person name="Duesterhoeft A."/>
            <person name="Ehrlich S.D."/>
            <person name="Emmerson P.T."/>
            <person name="Entian K.-D."/>
            <person name="Errington J."/>
            <person name="Fabret C."/>
            <person name="Ferrari E."/>
            <person name="Foulger D."/>
            <person name="Fritz C."/>
            <person name="Fujita M."/>
            <person name="Fujita Y."/>
            <person name="Fuma S."/>
            <person name="Galizzi A."/>
            <person name="Galleron N."/>
            <person name="Ghim S.-Y."/>
            <person name="Glaser P."/>
            <person name="Goffeau A."/>
            <person name="Golightly E.J."/>
            <person name="Grandi G."/>
            <person name="Guiseppi G."/>
            <person name="Guy B.J."/>
            <person name="Haga K."/>
            <person name="Haiech J."/>
            <person name="Harwood C.R."/>
            <person name="Henaut A."/>
            <person name="Hilbert H."/>
            <person name="Holsappel S."/>
            <person name="Hosono S."/>
            <person name="Hullo M.-F."/>
            <person name="Itaya M."/>
            <person name="Jones L.-M."/>
            <person name="Joris B."/>
            <person name="Karamata D."/>
            <person name="Kasahara Y."/>
            <person name="Klaerr-Blanchard M."/>
            <person name="Klein C."/>
            <person name="Kobayashi Y."/>
            <person name="Koetter P."/>
            <person name="Koningstein G."/>
            <person name="Krogh S."/>
            <person name="Kumano M."/>
            <person name="Kurita K."/>
            <person name="Lapidus A."/>
            <person name="Lardinois S."/>
            <person name="Lauber J."/>
            <person name="Lazarevic V."/>
            <person name="Lee S.-M."/>
            <person name="Levine A."/>
            <person name="Liu H."/>
            <person name="Masuda S."/>
            <person name="Mauel C."/>
            <person name="Medigue C."/>
            <person name="Medina N."/>
            <person name="Mellado R.P."/>
            <person name="Mizuno M."/>
            <person name="Moestl D."/>
            <person name="Nakai S."/>
            <person name="Noback M."/>
            <person name="Noone D."/>
            <person name="O'Reilly M."/>
            <person name="Ogawa K."/>
            <person name="Ogiwara A."/>
            <person name="Oudega B."/>
            <person name="Park S.-H."/>
            <person name="Parro V."/>
            <person name="Pohl T.M."/>
            <person name="Portetelle D."/>
            <person name="Porwollik S."/>
            <person name="Prescott A.M."/>
            <person name="Presecan E."/>
            <person name="Pujic P."/>
            <person name="Purnelle B."/>
            <person name="Rapoport G."/>
            <person name="Rey M."/>
            <person name="Reynolds S."/>
            <person name="Rieger M."/>
            <person name="Rivolta C."/>
            <person name="Rocha E."/>
            <person name="Roche B."/>
            <person name="Rose M."/>
            <person name="Sadaie Y."/>
            <person name="Sato T."/>
            <person name="Scanlan E."/>
            <person name="Schleich S."/>
            <person name="Schroeter R."/>
            <person name="Scoffone F."/>
            <person name="Sekiguchi J."/>
            <person name="Sekowska A."/>
            <person name="Seror S.J."/>
            <person name="Serror P."/>
            <person name="Shin B.-S."/>
            <person name="Soldo B."/>
            <person name="Sorokin A."/>
            <person name="Tacconi E."/>
            <person name="Takagi T."/>
            <person name="Takahashi H."/>
            <person name="Takemaru K."/>
            <person name="Takeuchi M."/>
            <person name="Tamakoshi A."/>
            <person name="Tanaka T."/>
            <person name="Terpstra P."/>
            <person name="Tognoni A."/>
            <person name="Tosato V."/>
            <person name="Uchiyama S."/>
            <person name="Vandenbol M."/>
            <person name="Vannier F."/>
            <person name="Vassarotti A."/>
            <person name="Viari A."/>
            <person name="Wambutt R."/>
            <person name="Wedler E."/>
            <person name="Wedler H."/>
            <person name="Weitzenegger T."/>
            <person name="Winters P."/>
            <person name="Wipat A."/>
            <person name="Yamamoto H."/>
            <person name="Yamane K."/>
            <person name="Yasumoto K."/>
            <person name="Yata K."/>
            <person name="Yoshida K."/>
            <person name="Yoshikawa H.-F."/>
            <person name="Zumstein E."/>
            <person name="Yoshikawa H."/>
            <person name="Danchin A."/>
        </authorList>
    </citation>
    <scope>NUCLEOTIDE SEQUENCE [LARGE SCALE GENOMIC DNA]</scope>
    <source>
        <strain>168</strain>
    </source>
</reference>
<reference key="4">
    <citation type="journal article" date="1986" name="J. Bacteriol.">
        <title>Correlation of penicillin-binding protein composition with different functions of two membranes in Bacillus subtilis forespores.</title>
        <authorList>
            <person name="Buchanan C.E."/>
            <person name="Neyman S.L."/>
        </authorList>
    </citation>
    <scope>FUNCTION</scope>
    <scope>SUBCELLULAR LOCATION</scope>
    <scope>DEVELOPMENTAL STAGE</scope>
    <scope>PENICILLIN-BINDING</scope>
    <source>
        <strain>168</strain>
    </source>
</reference>
<reference key="5">
    <citation type="journal article" date="1998" name="J. Bacteriol.">
        <title>Bacillus subtilis cells lacking penicillin-binding protein 1 require increased levels of divalent cations for growth.</title>
        <authorList>
            <person name="Murray T."/>
            <person name="Popham D.L."/>
            <person name="Setlow P."/>
        </authorList>
    </citation>
    <scope>GROWTH REQUIREMENTS</scope>
    <scope>DISRUPTION PHENOTYPE</scope>
    <source>
        <strain>168</strain>
    </source>
</reference>
<reference key="6">
    <citation type="journal article" date="1998" name="J. Bacteriol.">
        <title>Analysis of outgrowth of Bacillus subtilis spores lacking penicillin-binding protein 2a.</title>
        <authorList>
            <person name="Murray T."/>
            <person name="Popham D.L."/>
            <person name="Pearson C.B."/>
            <person name="Hand A.R."/>
            <person name="Setlow P."/>
        </authorList>
    </citation>
    <scope>FUNCTION</scope>
    <scope>DISRUPTION PHENOTYPE</scope>
    <source>
        <strain>168 / PS832</strain>
    </source>
</reference>
<reference key="7">
    <citation type="journal article" date="1999" name="J. Bacteriol.">
        <title>Septal localization of penicillin-binding protein 1 in Bacillus subtilis.</title>
        <authorList>
            <person name="Pedersen L.B."/>
            <person name="Angert E.R."/>
            <person name="Setlow P."/>
        </authorList>
    </citation>
    <scope>SUBCELLULAR LOCATION</scope>
    <source>
        <strain>168</strain>
    </source>
</reference>
<proteinExistence type="evidence at protein level"/>